<accession>Q9TUZ0</accession>
<feature type="chain" id="PRO_0000182431" description="Signal transducer and activator of transcription 5B">
    <location>
        <begin position="1"/>
        <end position="787"/>
    </location>
</feature>
<feature type="domain" description="SH2" evidence="5">
    <location>
        <begin position="589"/>
        <end position="686"/>
    </location>
</feature>
<feature type="modified residue" description="Phosphotyrosine" evidence="4">
    <location>
        <position position="90"/>
    </location>
</feature>
<feature type="modified residue" description="Phosphoserine" evidence="4">
    <location>
        <position position="128"/>
    </location>
</feature>
<feature type="modified residue" description="Phosphotyrosine" evidence="2">
    <location>
        <position position="682"/>
    </location>
</feature>
<feature type="modified residue" description="Phosphotyrosine; by HCK, JAK and PTK6" evidence="4">
    <location>
        <position position="699"/>
    </location>
</feature>
<feature type="sequence variant">
    <original>P</original>
    <variation>L</variation>
    <location>
        <position position="153"/>
    </location>
</feature>
<feature type="sequence variant">
    <original>R</original>
    <variation>Q</variation>
    <location>
        <position position="378"/>
    </location>
</feature>
<feature type="sequence variant">
    <original>C</original>
    <variation>Y</variation>
    <location>
        <position position="392"/>
    </location>
</feature>
<protein>
    <recommendedName>
        <fullName>Signal transducer and activator of transcription 5B</fullName>
    </recommendedName>
</protein>
<reference key="1">
    <citation type="submission" date="1999-03" db="EMBL/GenBank/DDBJ databases">
        <authorList>
            <person name="Palin M.-F."/>
            <person name="Beaudry D."/>
            <person name="Roberge C."/>
            <person name="Farmer C."/>
        </authorList>
    </citation>
    <scope>NUCLEOTIDE SEQUENCE [MRNA]</scope>
    <source>
        <strain>Large white</strain>
        <tissue>Mammary gland</tissue>
    </source>
</reference>
<proteinExistence type="evidence at transcript level"/>
<name>STA5B_PIG</name>
<gene>
    <name type="primary">STAT5B</name>
</gene>
<evidence type="ECO:0000250" key="1"/>
<evidence type="ECO:0000250" key="2">
    <source>
        <dbReference type="UniProtKB" id="P42229"/>
    </source>
</evidence>
<evidence type="ECO:0000250" key="3">
    <source>
        <dbReference type="UniProtKB" id="P42232"/>
    </source>
</evidence>
<evidence type="ECO:0000250" key="4">
    <source>
        <dbReference type="UniProtKB" id="P51692"/>
    </source>
</evidence>
<evidence type="ECO:0000255" key="5">
    <source>
        <dbReference type="PROSITE-ProRule" id="PRU00191"/>
    </source>
</evidence>
<evidence type="ECO:0000305" key="6"/>
<keyword id="KW-0010">Activator</keyword>
<keyword id="KW-0963">Cytoplasm</keyword>
<keyword id="KW-0238">DNA-binding</keyword>
<keyword id="KW-0539">Nucleus</keyword>
<keyword id="KW-0597">Phosphoprotein</keyword>
<keyword id="KW-1185">Reference proteome</keyword>
<keyword id="KW-0727">SH2 domain</keyword>
<keyword id="KW-0804">Transcription</keyword>
<keyword id="KW-0805">Transcription regulation</keyword>
<organism>
    <name type="scientific">Sus scrofa</name>
    <name type="common">Pig</name>
    <dbReference type="NCBI Taxonomy" id="9823"/>
    <lineage>
        <taxon>Eukaryota</taxon>
        <taxon>Metazoa</taxon>
        <taxon>Chordata</taxon>
        <taxon>Craniata</taxon>
        <taxon>Vertebrata</taxon>
        <taxon>Euteleostomi</taxon>
        <taxon>Mammalia</taxon>
        <taxon>Eutheria</taxon>
        <taxon>Laurasiatheria</taxon>
        <taxon>Artiodactyla</taxon>
        <taxon>Suina</taxon>
        <taxon>Suidae</taxon>
        <taxon>Sus</taxon>
    </lineage>
</organism>
<comment type="function">
    <text evidence="4">Carries out a dual function: signal transduction and activation of transcription. Mediates cellular responses to the cytokine KITLG/SCF and other growth factors. Binds to the GAS element and activates PRL-induced transcription. Positively regulates hematopoietic/erythroid differentiation.</text>
</comment>
<comment type="subunit">
    <text evidence="3 4">Upon activation, forms a homodimer or a heterodimer with a related family member. Binds NR3C1. Interacts with NCOA1. Interacts with NMI. Interacts with SOCS7. Interacts (via SH2 domain) with INSR. Interacts with CPEB3; this inhibits STAT5B-mediated transcriptional activation.</text>
</comment>
<comment type="subcellular location">
    <subcellularLocation>
        <location evidence="3">Cytoplasm</location>
    </subcellularLocation>
    <subcellularLocation>
        <location evidence="3">Nucleus</location>
    </subcellularLocation>
    <text evidence="1">Translocated into the nucleus in response to phosphorylation.</text>
</comment>
<comment type="PTM">
    <text evidence="4">Tyrosine phosphorylated in response to signaling via activated KIT, resulting in translocation to the nucleus. Tyrosine phosphorylated in response to signaling via activated FLT3; wild-type FLT3 results in much weaker phosphorylation than constitutively activated mutant FLT3. Alternatively, can be phosphorylated by JAK2. Phosphorylation at Tyr-699 by PTK6 or HCK leads to an increase of its transcriptional activity.</text>
</comment>
<comment type="similarity">
    <text evidence="6">Belongs to the transcription factor STAT family.</text>
</comment>
<sequence length="787" mass="89902">MAVWIQAQQLQGDALHQMQALYGQHFPIEVRHYLSQWIESQAWDSIDLDNPQENIKATQLLEGLVQELQKKAEHQVGEDGFLLKIKLGHYATQLQNTYDRCPMELVRCIRHILYNEQRLVREANNGTSPAGSLADAMSQKHLQINQTFEELRPVTQDTENELKKLQQTQEYFIIQYQESLRIQAQFAQLAQLNPQERLSRETALQQKQVTLEAWLQREAQTLQQYRVELAEKHQKTLQLLRKQQTIILDDELIQWKRRQQLAGNGGPPEGSLDVLQSWCEKLAEIIWQNRQQIRRAEHLCQQLPIPGPVEEMLAEVNATITDIISALVTSTFIIEKQPPQVLKTQTKFAATVRLLVGGKLNVHMNPPQVKATIISEQRAKSLLKNESTRNDCSGEILNNCCVMEYHQATGTLSAHFRNMSLKRIKRSDRRGAESVTEEKFTILFESQFSVGGNELVFQVKTLSLPVVVIVHGSQDNNATATVLWDNAFAEPGRVPFAVPDKVLWPQLCEALNMKFKAEVQSNRGLTKENLVFLAQKLFNSSSSHLEDYSGMSVSWSQFNRENLPGRNYTFWQWFDGVMEVLKKHLKPHWNDGAILGFVNKQQAHDLLINKPDGTFLLRFSDSEIGGITIAWKFDSQERMFWNLMPFTTRDFSIRSLADRLGDLNYLIYVFPDRPKDEVYSKYYTPVPCEPATAKAVDGYVKPQIKQVVPEFVSASSDSAGGNATYMDQAPSPAVCPQAHYSIYPQNPDPVLDNDGDFDLDDTMDVARRVEELLGRPMDSQWIPHAQS</sequence>
<dbReference type="EMBL" id="AF135123">
    <property type="protein sequence ID" value="AAD46164.1"/>
    <property type="molecule type" value="mRNA"/>
</dbReference>
<dbReference type="RefSeq" id="NP_999333.1">
    <property type="nucleotide sequence ID" value="NM_214168.1"/>
</dbReference>
<dbReference type="SMR" id="Q9TUZ0"/>
<dbReference type="FunCoup" id="Q9TUZ0">
    <property type="interactions" value="1031"/>
</dbReference>
<dbReference type="STRING" id="9823.ENSSSCP00000018443"/>
<dbReference type="PaxDb" id="9823-ENSSSCP00000018443"/>
<dbReference type="PeptideAtlas" id="Q9TUZ0"/>
<dbReference type="GeneID" id="397340"/>
<dbReference type="KEGG" id="ssc:397340"/>
<dbReference type="CTD" id="6777"/>
<dbReference type="eggNOG" id="KOG3667">
    <property type="taxonomic scope" value="Eukaryota"/>
</dbReference>
<dbReference type="InParanoid" id="Q9TUZ0"/>
<dbReference type="OrthoDB" id="19300at2759"/>
<dbReference type="Proteomes" id="UP000008227">
    <property type="component" value="Unplaced"/>
</dbReference>
<dbReference type="Proteomes" id="UP000314985">
    <property type="component" value="Unplaced"/>
</dbReference>
<dbReference type="Proteomes" id="UP000694570">
    <property type="component" value="Unplaced"/>
</dbReference>
<dbReference type="Proteomes" id="UP000694571">
    <property type="component" value="Unplaced"/>
</dbReference>
<dbReference type="Proteomes" id="UP000694720">
    <property type="component" value="Unplaced"/>
</dbReference>
<dbReference type="Proteomes" id="UP000694722">
    <property type="component" value="Unplaced"/>
</dbReference>
<dbReference type="Proteomes" id="UP000694723">
    <property type="component" value="Unplaced"/>
</dbReference>
<dbReference type="Proteomes" id="UP000694724">
    <property type="component" value="Unplaced"/>
</dbReference>
<dbReference type="Proteomes" id="UP000694725">
    <property type="component" value="Unplaced"/>
</dbReference>
<dbReference type="Proteomes" id="UP000694726">
    <property type="component" value="Unplaced"/>
</dbReference>
<dbReference type="Proteomes" id="UP000694727">
    <property type="component" value="Unplaced"/>
</dbReference>
<dbReference type="Proteomes" id="UP000694728">
    <property type="component" value="Unplaced"/>
</dbReference>
<dbReference type="GO" id="GO:0005737">
    <property type="term" value="C:cytoplasm"/>
    <property type="evidence" value="ECO:0000250"/>
    <property type="project" value="UniProtKB"/>
</dbReference>
<dbReference type="GO" id="GO:0005829">
    <property type="term" value="C:cytosol"/>
    <property type="evidence" value="ECO:0007669"/>
    <property type="project" value="UniProtKB-ARBA"/>
</dbReference>
<dbReference type="GO" id="GO:0005634">
    <property type="term" value="C:nucleus"/>
    <property type="evidence" value="ECO:0000250"/>
    <property type="project" value="UniProtKB"/>
</dbReference>
<dbReference type="GO" id="GO:0090575">
    <property type="term" value="C:RNA polymerase II transcription regulator complex"/>
    <property type="evidence" value="ECO:0000318"/>
    <property type="project" value="GO_Central"/>
</dbReference>
<dbReference type="GO" id="GO:0003682">
    <property type="term" value="F:chromatin binding"/>
    <property type="evidence" value="ECO:0000250"/>
    <property type="project" value="UniProtKB"/>
</dbReference>
<dbReference type="GO" id="GO:0003677">
    <property type="term" value="F:DNA binding"/>
    <property type="evidence" value="ECO:0000250"/>
    <property type="project" value="AgBase"/>
</dbReference>
<dbReference type="GO" id="GO:0001228">
    <property type="term" value="F:DNA-binding transcription activator activity, RNA polymerase II-specific"/>
    <property type="evidence" value="ECO:0000250"/>
    <property type="project" value="UniProtKB"/>
</dbReference>
<dbReference type="GO" id="GO:0000981">
    <property type="term" value="F:DNA-binding transcription factor activity, RNA polymerase II-specific"/>
    <property type="evidence" value="ECO:0000318"/>
    <property type="project" value="GO_Central"/>
</dbReference>
<dbReference type="GO" id="GO:0046983">
    <property type="term" value="F:protein dimerization activity"/>
    <property type="evidence" value="ECO:0000250"/>
    <property type="project" value="UniProtKB"/>
</dbReference>
<dbReference type="GO" id="GO:0042803">
    <property type="term" value="F:protein homodimerization activity"/>
    <property type="evidence" value="ECO:0000250"/>
    <property type="project" value="UniProtKB"/>
</dbReference>
<dbReference type="GO" id="GO:0000978">
    <property type="term" value="F:RNA polymerase II cis-regulatory region sequence-specific DNA binding"/>
    <property type="evidence" value="ECO:0000318"/>
    <property type="project" value="GO_Central"/>
</dbReference>
<dbReference type="GO" id="GO:0007259">
    <property type="term" value="P:cell surface receptor signaling pathway via JAK-STAT"/>
    <property type="evidence" value="ECO:0000250"/>
    <property type="project" value="AgBase"/>
</dbReference>
<dbReference type="GO" id="GO:0071364">
    <property type="term" value="P:cellular response to epidermal growth factor stimulus"/>
    <property type="evidence" value="ECO:0000250"/>
    <property type="project" value="UniProtKB"/>
</dbReference>
<dbReference type="GO" id="GO:0071363">
    <property type="term" value="P:cellular response to growth factor stimulus"/>
    <property type="evidence" value="ECO:0000250"/>
    <property type="project" value="UniProtKB"/>
</dbReference>
<dbReference type="GO" id="GO:0019221">
    <property type="term" value="P:cytokine-mediated signaling pathway"/>
    <property type="evidence" value="ECO:0000250"/>
    <property type="project" value="AgBase"/>
</dbReference>
<dbReference type="GO" id="GO:0006952">
    <property type="term" value="P:defense response"/>
    <property type="evidence" value="ECO:0000318"/>
    <property type="project" value="GO_Central"/>
</dbReference>
<dbReference type="GO" id="GO:0046543">
    <property type="term" value="P:development of secondary female sexual characteristics"/>
    <property type="evidence" value="ECO:0000250"/>
    <property type="project" value="AgBase"/>
</dbReference>
<dbReference type="GO" id="GO:0046544">
    <property type="term" value="P:development of secondary male sexual characteristics"/>
    <property type="evidence" value="ECO:0000250"/>
    <property type="project" value="AgBase"/>
</dbReference>
<dbReference type="GO" id="GO:0007565">
    <property type="term" value="P:female pregnancy"/>
    <property type="evidence" value="ECO:0000250"/>
    <property type="project" value="AgBase"/>
</dbReference>
<dbReference type="GO" id="GO:0060397">
    <property type="term" value="P:growth hormone receptor signaling pathway via JAK-STAT"/>
    <property type="evidence" value="ECO:0000318"/>
    <property type="project" value="GO_Central"/>
</dbReference>
<dbReference type="GO" id="GO:0007595">
    <property type="term" value="P:lactation"/>
    <property type="evidence" value="ECO:0000250"/>
    <property type="project" value="AgBase"/>
</dbReference>
<dbReference type="GO" id="GO:0019915">
    <property type="term" value="P:lipid storage"/>
    <property type="evidence" value="ECO:0000250"/>
    <property type="project" value="AgBase"/>
</dbReference>
<dbReference type="GO" id="GO:0001553">
    <property type="term" value="P:luteinization"/>
    <property type="evidence" value="ECO:0000250"/>
    <property type="project" value="AgBase"/>
</dbReference>
<dbReference type="GO" id="GO:0001779">
    <property type="term" value="P:natural killer cell differentiation"/>
    <property type="evidence" value="ECO:0000250"/>
    <property type="project" value="AgBase"/>
</dbReference>
<dbReference type="GO" id="GO:0043066">
    <property type="term" value="P:negative regulation of apoptotic process"/>
    <property type="evidence" value="ECO:0000250"/>
    <property type="project" value="AgBase"/>
</dbReference>
<dbReference type="GO" id="GO:0045647">
    <property type="term" value="P:negative regulation of erythrocyte differentiation"/>
    <property type="evidence" value="ECO:0000250"/>
    <property type="project" value="AgBase"/>
</dbReference>
<dbReference type="GO" id="GO:0042104">
    <property type="term" value="P:positive regulation of activated T cell proliferation"/>
    <property type="evidence" value="ECO:0000250"/>
    <property type="project" value="AgBase"/>
</dbReference>
<dbReference type="GO" id="GO:0045579">
    <property type="term" value="P:positive regulation of B cell differentiation"/>
    <property type="evidence" value="ECO:0000250"/>
    <property type="project" value="AgBase"/>
</dbReference>
<dbReference type="GO" id="GO:0008284">
    <property type="term" value="P:positive regulation of cell population proliferation"/>
    <property type="evidence" value="ECO:0000250"/>
    <property type="project" value="AgBase"/>
</dbReference>
<dbReference type="GO" id="GO:0045648">
    <property type="term" value="P:positive regulation of erythrocyte differentiation"/>
    <property type="evidence" value="ECO:0000250"/>
    <property type="project" value="UniProtKB"/>
</dbReference>
<dbReference type="GO" id="GO:0050729">
    <property type="term" value="P:positive regulation of inflammatory response"/>
    <property type="evidence" value="ECO:0000250"/>
    <property type="project" value="AgBase"/>
</dbReference>
<dbReference type="GO" id="GO:0032743">
    <property type="term" value="P:positive regulation of interleukin-2 production"/>
    <property type="evidence" value="ECO:0000250"/>
    <property type="project" value="AgBase"/>
</dbReference>
<dbReference type="GO" id="GO:0045931">
    <property type="term" value="P:positive regulation of mitotic cell cycle"/>
    <property type="evidence" value="ECO:0000250"/>
    <property type="project" value="AgBase"/>
</dbReference>
<dbReference type="GO" id="GO:0040018">
    <property type="term" value="P:positive regulation of multicellular organism growth"/>
    <property type="evidence" value="ECO:0000250"/>
    <property type="project" value="AgBase"/>
</dbReference>
<dbReference type="GO" id="GO:0045944">
    <property type="term" value="P:positive regulation of transcription by RNA polymerase II"/>
    <property type="evidence" value="ECO:0000250"/>
    <property type="project" value="AgBase"/>
</dbReference>
<dbReference type="GO" id="GO:0042448">
    <property type="term" value="P:progesterone metabolic process"/>
    <property type="evidence" value="ECO:0000250"/>
    <property type="project" value="AgBase"/>
</dbReference>
<dbReference type="GO" id="GO:0030155">
    <property type="term" value="P:regulation of cell adhesion"/>
    <property type="evidence" value="ECO:0000250"/>
    <property type="project" value="AgBase"/>
</dbReference>
<dbReference type="GO" id="GO:0042127">
    <property type="term" value="P:regulation of cell population proliferation"/>
    <property type="evidence" value="ECO:0000318"/>
    <property type="project" value="GO_Central"/>
</dbReference>
<dbReference type="GO" id="GO:0030856">
    <property type="term" value="P:regulation of epithelial cell differentiation"/>
    <property type="evidence" value="ECO:0000250"/>
    <property type="project" value="AgBase"/>
</dbReference>
<dbReference type="GO" id="GO:0019218">
    <property type="term" value="P:regulation of steroid metabolic process"/>
    <property type="evidence" value="ECO:0000250"/>
    <property type="project" value="AgBase"/>
</dbReference>
<dbReference type="GO" id="GO:0006357">
    <property type="term" value="P:regulation of transcription by RNA polymerase II"/>
    <property type="evidence" value="ECO:0000318"/>
    <property type="project" value="GO_Central"/>
</dbReference>
<dbReference type="GO" id="GO:0043434">
    <property type="term" value="P:response to peptide hormone"/>
    <property type="evidence" value="ECO:0000318"/>
    <property type="project" value="GO_Central"/>
</dbReference>
<dbReference type="GO" id="GO:0043029">
    <property type="term" value="P:T cell homeostasis"/>
    <property type="evidence" value="ECO:0000250"/>
    <property type="project" value="AgBase"/>
</dbReference>
<dbReference type="CDD" id="cd10420">
    <property type="entry name" value="SH2_STAT5b"/>
    <property type="match status" value="1"/>
</dbReference>
<dbReference type="CDD" id="cd16855">
    <property type="entry name" value="STAT5_CCD"/>
    <property type="match status" value="1"/>
</dbReference>
<dbReference type="CDD" id="cd16849">
    <property type="entry name" value="STAT5_DBD"/>
    <property type="match status" value="1"/>
</dbReference>
<dbReference type="FunFam" id="1.10.532.10:FF:000002">
    <property type="entry name" value="Signal transducer and activator of transcription"/>
    <property type="match status" value="1"/>
</dbReference>
<dbReference type="FunFam" id="1.20.1050.20:FF:000002">
    <property type="entry name" value="Signal transducer and activator of transcription"/>
    <property type="match status" value="1"/>
</dbReference>
<dbReference type="FunFam" id="2.60.40.630:FF:000002">
    <property type="entry name" value="Signal transducer and activator of transcription"/>
    <property type="match status" value="1"/>
</dbReference>
<dbReference type="FunFam" id="3.30.505.10:FF:000025">
    <property type="entry name" value="Signal transducer and activator of transcription"/>
    <property type="match status" value="1"/>
</dbReference>
<dbReference type="FunFam" id="1.10.238.10:FF:000029">
    <property type="entry name" value="Signal transducer and transcription activator 6"/>
    <property type="match status" value="1"/>
</dbReference>
<dbReference type="Gene3D" id="1.10.238.10">
    <property type="entry name" value="EF-hand"/>
    <property type="match status" value="1"/>
</dbReference>
<dbReference type="Gene3D" id="3.30.505.10">
    <property type="entry name" value="SH2 domain"/>
    <property type="match status" value="1"/>
</dbReference>
<dbReference type="Gene3D" id="1.20.1050.20">
    <property type="entry name" value="STAT transcription factor, all-alpha domain"/>
    <property type="match status" value="1"/>
</dbReference>
<dbReference type="Gene3D" id="2.60.40.630">
    <property type="entry name" value="STAT transcription factor, DNA-binding domain"/>
    <property type="match status" value="1"/>
</dbReference>
<dbReference type="Gene3D" id="1.10.532.10">
    <property type="entry name" value="STAT transcription factor, N-terminal domain"/>
    <property type="match status" value="1"/>
</dbReference>
<dbReference type="InterPro" id="IPR008967">
    <property type="entry name" value="p53-like_TF_DNA-bd_sf"/>
</dbReference>
<dbReference type="InterPro" id="IPR000980">
    <property type="entry name" value="SH2"/>
</dbReference>
<dbReference type="InterPro" id="IPR036860">
    <property type="entry name" value="SH2_dom_sf"/>
</dbReference>
<dbReference type="InterPro" id="IPR001217">
    <property type="entry name" value="STAT"/>
</dbReference>
<dbReference type="InterPro" id="IPR046994">
    <property type="entry name" value="STAT5_CCD"/>
</dbReference>
<dbReference type="InterPro" id="IPR035858">
    <property type="entry name" value="STAT5a/5b_DBD"/>
</dbReference>
<dbReference type="InterPro" id="IPR035886">
    <property type="entry name" value="STAT5b_SH2"/>
</dbReference>
<dbReference type="InterPro" id="IPR048988">
    <property type="entry name" value="STAT_linker"/>
</dbReference>
<dbReference type="InterPro" id="IPR036535">
    <property type="entry name" value="STAT_N_sf"/>
</dbReference>
<dbReference type="InterPro" id="IPR013800">
    <property type="entry name" value="STAT_TF_alpha"/>
</dbReference>
<dbReference type="InterPro" id="IPR015988">
    <property type="entry name" value="STAT_TF_coiled-coil"/>
</dbReference>
<dbReference type="InterPro" id="IPR013801">
    <property type="entry name" value="STAT_TF_DNA-bd"/>
</dbReference>
<dbReference type="InterPro" id="IPR012345">
    <property type="entry name" value="STAT_TF_DNA-bd_N"/>
</dbReference>
<dbReference type="InterPro" id="IPR013799">
    <property type="entry name" value="STAT_TF_prot_interaction"/>
</dbReference>
<dbReference type="PANTHER" id="PTHR11801">
    <property type="entry name" value="SIGNAL TRANSDUCER AND ACTIVATOR OF TRANSCRIPTION"/>
    <property type="match status" value="1"/>
</dbReference>
<dbReference type="Pfam" id="PF00017">
    <property type="entry name" value="SH2"/>
    <property type="match status" value="1"/>
</dbReference>
<dbReference type="Pfam" id="PF01017">
    <property type="entry name" value="STAT_alpha"/>
    <property type="match status" value="1"/>
</dbReference>
<dbReference type="Pfam" id="PF02864">
    <property type="entry name" value="STAT_bind"/>
    <property type="match status" value="1"/>
</dbReference>
<dbReference type="Pfam" id="PF02865">
    <property type="entry name" value="STAT_int"/>
    <property type="match status" value="1"/>
</dbReference>
<dbReference type="Pfam" id="PF21354">
    <property type="entry name" value="STAT_linker"/>
    <property type="match status" value="1"/>
</dbReference>
<dbReference type="SMART" id="SM00252">
    <property type="entry name" value="SH2"/>
    <property type="match status" value="1"/>
</dbReference>
<dbReference type="SMART" id="SM00964">
    <property type="entry name" value="STAT_int"/>
    <property type="match status" value="1"/>
</dbReference>
<dbReference type="SUPFAM" id="SSF49417">
    <property type="entry name" value="p53-like transcription factors"/>
    <property type="match status" value="1"/>
</dbReference>
<dbReference type="SUPFAM" id="SSF55550">
    <property type="entry name" value="SH2 domain"/>
    <property type="match status" value="1"/>
</dbReference>
<dbReference type="SUPFAM" id="SSF47655">
    <property type="entry name" value="STAT"/>
    <property type="match status" value="1"/>
</dbReference>
<dbReference type="SUPFAM" id="SSF48092">
    <property type="entry name" value="Transcription factor STAT-4 N-domain"/>
    <property type="match status" value="1"/>
</dbReference>
<dbReference type="PROSITE" id="PS50001">
    <property type="entry name" value="SH2"/>
    <property type="match status" value="1"/>
</dbReference>